<proteinExistence type="evidence at transcript level"/>
<evidence type="ECO:0000250" key="1">
    <source>
        <dbReference type="UniProtKB" id="P11411"/>
    </source>
</evidence>
<evidence type="ECO:0000250" key="2">
    <source>
        <dbReference type="UniProtKB" id="P11413"/>
    </source>
</evidence>
<evidence type="ECO:0000305" key="3"/>
<sequence>MATQHFTNGSATDDGETALEHIIKSLETPTMKCEGTHFDSHVPHTFVIFGASGDLAKKKIYPTLWWLYRDNLLPKSTKFCGYARSKLTIEELRAKCHQYMKVQPDEQAKYEEFWQNHDYAAGSYDQRSDFVALKERLSSLESCNCSCNRIFYLALPPSVFERVTVNIKDICLAERGWNRVIIEKPFGRDDVTSKKLSDHLASLFHEDQLYRIDHYLGKEMVQNLMTIRFANKILNSTWNRENIASVLITFKEPFGTQGRGGYFDEFGIIRDVMQNHLLQILSLVAMEKPTSCQPDDIRDEKVKVLKSIPALTLDDMVLGQYVGNPNGVGEQREGYLDDPTVSNDSNTPTYAQGVLRINNERWDGVPFILRCGKALDERKAVVRIQYRDVPGDIFEGNSKRNELVIRVQPGEALYFKMMTKSPGITFDIEETELDLTYEHRYKNSYLPDAYERLILDVFCGSQMHFVRSDELSEAWRIFTPVLNEIENNKVKPIPYVFGSRGPKEADQKTSENNFKYYGSYKWIGKK</sequence>
<name>G6PD_CERCA</name>
<keyword id="KW-0119">Carbohydrate metabolism</keyword>
<keyword id="KW-0963">Cytoplasm</keyword>
<keyword id="KW-0313">Glucose metabolism</keyword>
<keyword id="KW-0521">NADP</keyword>
<keyword id="KW-0560">Oxidoreductase</keyword>
<organism>
    <name type="scientific">Ceratitis capitata</name>
    <name type="common">Mediterranean fruit fly</name>
    <name type="synonym">Tephritis capitata</name>
    <dbReference type="NCBI Taxonomy" id="7213"/>
    <lineage>
        <taxon>Eukaryota</taxon>
        <taxon>Metazoa</taxon>
        <taxon>Ecdysozoa</taxon>
        <taxon>Arthropoda</taxon>
        <taxon>Hexapoda</taxon>
        <taxon>Insecta</taxon>
        <taxon>Pterygota</taxon>
        <taxon>Neoptera</taxon>
        <taxon>Endopterygota</taxon>
        <taxon>Diptera</taxon>
        <taxon>Brachycera</taxon>
        <taxon>Muscomorpha</taxon>
        <taxon>Tephritoidea</taxon>
        <taxon>Tephritidae</taxon>
        <taxon>Ceratitis</taxon>
        <taxon>Ceratitis</taxon>
    </lineage>
</organism>
<reference key="1">
    <citation type="journal article" date="1993" name="Insect Mol. Biol.">
        <title>Isolation of cDNAs encoding 6-phosphogluconate dehydrogenase and glucose-6-phosphate dehydrogenase from the mediterranean fruit fly Ceratitis capitata: correlating genetic and physical maps of chromosome 5.</title>
        <authorList>
            <person name="Scott M.J."/>
            <person name="Kriticou D."/>
            <person name="Robinson A.S."/>
        </authorList>
    </citation>
    <scope>NUCLEOTIDE SEQUENCE [MRNA]</scope>
</reference>
<comment type="function">
    <text evidence="2">Cytosolic glucose-6-phosphate dehydrogenase that catalyzes the first and rate-limiting step of the oxidative branch within the pentose phosphate pathway/shunt, an alternative route to glycolysis for the dissimilation of carbohydrates and a major source of reducing power and metabolic intermediates for fatty acid and nucleic acid biosynthetic processes.</text>
</comment>
<comment type="catalytic activity">
    <reaction evidence="2">
        <text>D-glucose 6-phosphate + NADP(+) = 6-phospho-D-glucono-1,5-lactone + NADPH + H(+)</text>
        <dbReference type="Rhea" id="RHEA:15841"/>
        <dbReference type="ChEBI" id="CHEBI:15378"/>
        <dbReference type="ChEBI" id="CHEBI:57783"/>
        <dbReference type="ChEBI" id="CHEBI:57955"/>
        <dbReference type="ChEBI" id="CHEBI:58349"/>
        <dbReference type="ChEBI" id="CHEBI:61548"/>
        <dbReference type="EC" id="1.1.1.49"/>
    </reaction>
    <physiologicalReaction direction="left-to-right" evidence="2">
        <dbReference type="Rhea" id="RHEA:15842"/>
    </physiologicalReaction>
</comment>
<comment type="pathway">
    <text evidence="2">Carbohydrate degradation; pentose phosphate pathway; D-ribulose 5-phosphate from D-glucose 6-phosphate (oxidative stage): step 1/3.</text>
</comment>
<comment type="subcellular location">
    <subcellularLocation>
        <location evidence="2">Cytoplasm</location>
        <location evidence="2">Cytosol</location>
    </subcellularLocation>
</comment>
<comment type="similarity">
    <text evidence="3">Belongs to the glucose-6-phosphate dehydrogenase family.</text>
</comment>
<dbReference type="EC" id="1.1.1.49" evidence="2"/>
<dbReference type="EMBL" id="S67872">
    <property type="protein sequence ID" value="AAB29395.1"/>
    <property type="molecule type" value="mRNA"/>
</dbReference>
<dbReference type="RefSeq" id="NP_001266304.1">
    <property type="nucleotide sequence ID" value="NM_001279375.1"/>
</dbReference>
<dbReference type="SMR" id="P41571"/>
<dbReference type="EnsemblMetazoa" id="NM_001279375.1">
    <property type="protein sequence ID" value="NP_001266304.1"/>
    <property type="gene ID" value="GeneID_101453374"/>
</dbReference>
<dbReference type="GeneID" id="101453374"/>
<dbReference type="KEGG" id="ccat:101453374"/>
<dbReference type="CTD" id="32974"/>
<dbReference type="OrthoDB" id="60984at2759"/>
<dbReference type="UniPathway" id="UPA00115">
    <property type="reaction ID" value="UER00408"/>
</dbReference>
<dbReference type="GO" id="GO:0005829">
    <property type="term" value="C:cytosol"/>
    <property type="evidence" value="ECO:0007669"/>
    <property type="project" value="UniProtKB-SubCell"/>
</dbReference>
<dbReference type="GO" id="GO:0004345">
    <property type="term" value="F:glucose-6-phosphate dehydrogenase activity"/>
    <property type="evidence" value="ECO:0000250"/>
    <property type="project" value="UniProtKB"/>
</dbReference>
<dbReference type="GO" id="GO:0050661">
    <property type="term" value="F:NADP binding"/>
    <property type="evidence" value="ECO:0007669"/>
    <property type="project" value="InterPro"/>
</dbReference>
<dbReference type="GO" id="GO:0051156">
    <property type="term" value="P:glucose 6-phosphate metabolic process"/>
    <property type="evidence" value="ECO:0000250"/>
    <property type="project" value="UniProtKB"/>
</dbReference>
<dbReference type="GO" id="GO:0006006">
    <property type="term" value="P:glucose metabolic process"/>
    <property type="evidence" value="ECO:0007669"/>
    <property type="project" value="UniProtKB-KW"/>
</dbReference>
<dbReference type="GO" id="GO:0006739">
    <property type="term" value="P:NADP metabolic process"/>
    <property type="evidence" value="ECO:0000250"/>
    <property type="project" value="UniProtKB"/>
</dbReference>
<dbReference type="GO" id="GO:0009051">
    <property type="term" value="P:pentose-phosphate shunt, oxidative branch"/>
    <property type="evidence" value="ECO:0007669"/>
    <property type="project" value="TreeGrafter"/>
</dbReference>
<dbReference type="FunFam" id="3.30.360.10:FF:000013">
    <property type="entry name" value="Glucose-6-phosphate 1-dehydrogenase"/>
    <property type="match status" value="1"/>
</dbReference>
<dbReference type="FunFam" id="3.40.50.720:FF:000111">
    <property type="entry name" value="Glucose-6-phosphate 1-dehydrogenase"/>
    <property type="match status" value="1"/>
</dbReference>
<dbReference type="Gene3D" id="3.30.360.10">
    <property type="entry name" value="Dihydrodipicolinate Reductase, domain 2"/>
    <property type="match status" value="1"/>
</dbReference>
<dbReference type="Gene3D" id="3.40.50.720">
    <property type="entry name" value="NAD(P)-binding Rossmann-like Domain"/>
    <property type="match status" value="1"/>
</dbReference>
<dbReference type="HAMAP" id="MF_00966">
    <property type="entry name" value="G6PD"/>
    <property type="match status" value="1"/>
</dbReference>
<dbReference type="InterPro" id="IPR001282">
    <property type="entry name" value="G6P_DH"/>
</dbReference>
<dbReference type="InterPro" id="IPR019796">
    <property type="entry name" value="G6P_DH_AS"/>
</dbReference>
<dbReference type="InterPro" id="IPR022675">
    <property type="entry name" value="G6P_DH_C"/>
</dbReference>
<dbReference type="InterPro" id="IPR022674">
    <property type="entry name" value="G6P_DH_NAD-bd"/>
</dbReference>
<dbReference type="InterPro" id="IPR036291">
    <property type="entry name" value="NAD(P)-bd_dom_sf"/>
</dbReference>
<dbReference type="NCBIfam" id="TIGR00871">
    <property type="entry name" value="zwf"/>
    <property type="match status" value="1"/>
</dbReference>
<dbReference type="PANTHER" id="PTHR23429:SF0">
    <property type="entry name" value="GLUCOSE-6-PHOSPHATE 1-DEHYDROGENASE"/>
    <property type="match status" value="1"/>
</dbReference>
<dbReference type="PANTHER" id="PTHR23429">
    <property type="entry name" value="GLUCOSE-6-PHOSPHATE 1-DEHYDROGENASE G6PD"/>
    <property type="match status" value="1"/>
</dbReference>
<dbReference type="Pfam" id="PF02781">
    <property type="entry name" value="G6PD_C"/>
    <property type="match status" value="1"/>
</dbReference>
<dbReference type="Pfam" id="PF00479">
    <property type="entry name" value="G6PD_N"/>
    <property type="match status" value="1"/>
</dbReference>
<dbReference type="PIRSF" id="PIRSF000110">
    <property type="entry name" value="G6PD"/>
    <property type="match status" value="1"/>
</dbReference>
<dbReference type="PRINTS" id="PR00079">
    <property type="entry name" value="G6PDHDRGNASE"/>
</dbReference>
<dbReference type="SUPFAM" id="SSF55347">
    <property type="entry name" value="Glyceraldehyde-3-phosphate dehydrogenase-like, C-terminal domain"/>
    <property type="match status" value="1"/>
</dbReference>
<dbReference type="SUPFAM" id="SSF51735">
    <property type="entry name" value="NAD(P)-binding Rossmann-fold domains"/>
    <property type="match status" value="1"/>
</dbReference>
<dbReference type="PROSITE" id="PS00069">
    <property type="entry name" value="G6P_DEHYDROGENASE"/>
    <property type="match status" value="1"/>
</dbReference>
<feature type="chain" id="PRO_0000068090" description="Glucose-6-phosphate 1-dehydrogenase">
    <location>
        <begin position="1"/>
        <end position="526"/>
    </location>
</feature>
<feature type="active site" description="Proton acceptor" evidence="1">
    <location>
        <position position="276"/>
    </location>
</feature>
<feature type="binding site" evidence="2">
    <location>
        <begin position="50"/>
        <end position="57"/>
    </location>
    <ligand>
        <name>NADP(+)</name>
        <dbReference type="ChEBI" id="CHEBI:58349"/>
        <label>1</label>
    </ligand>
</feature>
<feature type="binding site" evidence="2">
    <location>
        <position position="84"/>
    </location>
    <ligand>
        <name>NADP(+)</name>
        <dbReference type="ChEBI" id="CHEBI:58349"/>
        <label>1</label>
    </ligand>
</feature>
<feature type="binding site" evidence="2">
    <location>
        <position position="184"/>
    </location>
    <ligand>
        <name>D-glucose 6-phosphate</name>
        <dbReference type="ChEBI" id="CHEBI:61548"/>
    </ligand>
</feature>
<feature type="binding site" evidence="2">
    <location>
        <position position="184"/>
    </location>
    <ligand>
        <name>NADP(+)</name>
        <dbReference type="ChEBI" id="CHEBI:58349"/>
        <label>1</label>
    </ligand>
</feature>
<feature type="binding site" evidence="2">
    <location>
        <begin position="214"/>
        <end position="218"/>
    </location>
    <ligand>
        <name>D-glucose 6-phosphate</name>
        <dbReference type="ChEBI" id="CHEBI:61548"/>
    </ligand>
</feature>
<feature type="binding site" evidence="2">
    <location>
        <position position="252"/>
    </location>
    <ligand>
        <name>D-glucose 6-phosphate</name>
        <dbReference type="ChEBI" id="CHEBI:61548"/>
    </ligand>
</feature>
<feature type="binding site" evidence="2">
    <location>
        <position position="271"/>
    </location>
    <ligand>
        <name>D-glucose 6-phosphate</name>
        <dbReference type="ChEBI" id="CHEBI:61548"/>
    </ligand>
</feature>
<feature type="binding site" evidence="2">
    <location>
        <position position="370"/>
    </location>
    <ligand>
        <name>NADP(+)</name>
        <dbReference type="ChEBI" id="CHEBI:58349"/>
        <label>2</label>
    </ligand>
</feature>
<feature type="binding site" evidence="2">
    <location>
        <position position="373"/>
    </location>
    <ligand>
        <name>D-glucose 6-phosphate</name>
        <dbReference type="ChEBI" id="CHEBI:61548"/>
    </ligand>
</feature>
<feature type="binding site" evidence="2">
    <location>
        <position position="378"/>
    </location>
    <ligand>
        <name>D-glucose 6-phosphate</name>
        <dbReference type="ChEBI" id="CHEBI:61548"/>
    </ligand>
</feature>
<feature type="binding site" evidence="2">
    <location>
        <position position="379"/>
    </location>
    <ligand>
        <name>NADP(+)</name>
        <dbReference type="ChEBI" id="CHEBI:58349"/>
        <label>2</label>
    </ligand>
</feature>
<feature type="binding site" evidence="2">
    <location>
        <position position="383"/>
    </location>
    <ligand>
        <name>NADP(+)</name>
        <dbReference type="ChEBI" id="CHEBI:58349"/>
        <label>2</label>
    </ligand>
</feature>
<feature type="binding site" evidence="2">
    <location>
        <position position="406"/>
    </location>
    <ligand>
        <name>NADP(+)</name>
        <dbReference type="ChEBI" id="CHEBI:58349"/>
        <label>2</label>
    </ligand>
</feature>
<feature type="binding site" evidence="2">
    <location>
        <position position="408"/>
    </location>
    <ligand>
        <name>D-glucose 6-phosphate</name>
        <dbReference type="ChEBI" id="CHEBI:61548"/>
    </ligand>
</feature>
<feature type="binding site" evidence="2">
    <location>
        <begin position="414"/>
        <end position="416"/>
    </location>
    <ligand>
        <name>NADP(+)</name>
        <dbReference type="ChEBI" id="CHEBI:58349"/>
        <label>2</label>
    </ligand>
</feature>
<feature type="binding site" evidence="2">
    <location>
        <begin position="434"/>
        <end position="436"/>
    </location>
    <ligand>
        <name>NADP(+)</name>
        <dbReference type="ChEBI" id="CHEBI:58349"/>
        <label>2</label>
    </ligand>
</feature>
<feature type="binding site" evidence="2">
    <location>
        <position position="500"/>
    </location>
    <ligand>
        <name>NADP(+)</name>
        <dbReference type="ChEBI" id="CHEBI:58349"/>
        <label>2</label>
    </ligand>
</feature>
<feature type="binding site" evidence="2">
    <location>
        <position position="516"/>
    </location>
    <ligand>
        <name>NADP(+)</name>
        <dbReference type="ChEBI" id="CHEBI:58349"/>
        <label>2</label>
    </ligand>
</feature>
<feature type="binding site" evidence="2">
    <location>
        <position position="522"/>
    </location>
    <ligand>
        <name>NADP(+)</name>
        <dbReference type="ChEBI" id="CHEBI:58349"/>
        <label>2</label>
    </ligand>
</feature>
<protein>
    <recommendedName>
        <fullName>Glucose-6-phosphate 1-dehydrogenase</fullName>
        <shortName>G6PD</shortName>
        <ecNumber evidence="2">1.1.1.49</ecNumber>
    </recommendedName>
    <alternativeName>
        <fullName>Zwischenferment</fullName>
    </alternativeName>
</protein>
<accession>P41571</accession>
<gene>
    <name type="primary">ZW</name>
</gene>